<reference key="1">
    <citation type="journal article" date="1998" name="FEMS Microbiol. Lett.">
        <title>Cloning and expression of the gene encoding RNA polymerase alpha subunit from alkaliphilic Bacillus sp. strain C-125.</title>
        <authorList>
            <person name="Nakasone K."/>
            <person name="Takaki Y."/>
            <person name="Takami H."/>
            <person name="Inoue A."/>
            <person name="Horikoshi K."/>
        </authorList>
    </citation>
    <scope>NUCLEOTIDE SEQUENCE [GENOMIC DNA]</scope>
    <source>
        <strain>ATCC BAA-125 / DSM 18197 / FERM 7344 / JCM 9153 / C-125</strain>
    </source>
</reference>
<reference key="2">
    <citation type="journal article" date="1999" name="Biosci. Biotechnol. Biochem.">
        <title>Sequence analysis of a 32-kb region including the major ribosomal protein gene clusters from alkaliphilic Bacillus sp. strain C-125.</title>
        <authorList>
            <person name="Takami H."/>
            <person name="Takaki Y."/>
            <person name="Nakasone K."/>
            <person name="Hirama C."/>
            <person name="Inoue A."/>
            <person name="Horikoshi K."/>
        </authorList>
    </citation>
    <scope>NUCLEOTIDE SEQUENCE [GENOMIC DNA]</scope>
    <source>
        <strain>ATCC BAA-125 / DSM 18197 / FERM 7344 / JCM 9153 / C-125</strain>
    </source>
</reference>
<reference key="3">
    <citation type="journal article" date="2000" name="Nucleic Acids Res.">
        <title>Complete genome sequence of the alkaliphilic bacterium Bacillus halodurans and genomic sequence comparison with Bacillus subtilis.</title>
        <authorList>
            <person name="Takami H."/>
            <person name="Nakasone K."/>
            <person name="Takaki Y."/>
            <person name="Maeno G."/>
            <person name="Sasaki R."/>
            <person name="Masui N."/>
            <person name="Fuji F."/>
            <person name="Hirama C."/>
            <person name="Nakamura Y."/>
            <person name="Ogasawara N."/>
            <person name="Kuhara S."/>
            <person name="Horikoshi K."/>
        </authorList>
    </citation>
    <scope>NUCLEOTIDE SEQUENCE [LARGE SCALE GENOMIC DNA]</scope>
    <source>
        <strain>ATCC BAA-125 / DSM 18197 / FERM 7344 / JCM 9153 / C-125</strain>
    </source>
</reference>
<gene>
    <name evidence="1" type="primary">rpsM</name>
    <name type="ordered locus">BH0160</name>
</gene>
<protein>
    <recommendedName>
        <fullName evidence="1">Small ribosomal subunit protein uS13</fullName>
    </recommendedName>
    <alternativeName>
        <fullName evidence="3">30S ribosomal protein S13</fullName>
    </alternativeName>
</protein>
<keyword id="KW-1185">Reference proteome</keyword>
<keyword id="KW-0687">Ribonucleoprotein</keyword>
<keyword id="KW-0689">Ribosomal protein</keyword>
<keyword id="KW-0694">RNA-binding</keyword>
<keyword id="KW-0699">rRNA-binding</keyword>
<keyword id="KW-0820">tRNA-binding</keyword>
<dbReference type="EMBL" id="AB010082">
    <property type="protein sequence ID" value="BAA24192.1"/>
    <property type="molecule type" value="Genomic_DNA"/>
</dbReference>
<dbReference type="EMBL" id="AB017508">
    <property type="protein sequence ID" value="BAA75296.1"/>
    <property type="molecule type" value="Genomic_DNA"/>
</dbReference>
<dbReference type="EMBL" id="BA000004">
    <property type="protein sequence ID" value="BAB03879.1"/>
    <property type="molecule type" value="Genomic_DNA"/>
</dbReference>
<dbReference type="PIR" id="T44408">
    <property type="entry name" value="T44408"/>
</dbReference>
<dbReference type="RefSeq" id="WP_010896342.1">
    <property type="nucleotide sequence ID" value="NC_002570.2"/>
</dbReference>
<dbReference type="SMR" id="O50632"/>
<dbReference type="STRING" id="272558.gene:10726000"/>
<dbReference type="GeneID" id="87595701"/>
<dbReference type="KEGG" id="bha:BH0160"/>
<dbReference type="eggNOG" id="COG0099">
    <property type="taxonomic scope" value="Bacteria"/>
</dbReference>
<dbReference type="HOGENOM" id="CLU_103849_1_1_9"/>
<dbReference type="OrthoDB" id="9803610at2"/>
<dbReference type="Proteomes" id="UP000001258">
    <property type="component" value="Chromosome"/>
</dbReference>
<dbReference type="GO" id="GO:0005829">
    <property type="term" value="C:cytosol"/>
    <property type="evidence" value="ECO:0007669"/>
    <property type="project" value="TreeGrafter"/>
</dbReference>
<dbReference type="GO" id="GO:0015935">
    <property type="term" value="C:small ribosomal subunit"/>
    <property type="evidence" value="ECO:0007669"/>
    <property type="project" value="TreeGrafter"/>
</dbReference>
<dbReference type="GO" id="GO:0019843">
    <property type="term" value="F:rRNA binding"/>
    <property type="evidence" value="ECO:0007669"/>
    <property type="project" value="UniProtKB-UniRule"/>
</dbReference>
<dbReference type="GO" id="GO:0003735">
    <property type="term" value="F:structural constituent of ribosome"/>
    <property type="evidence" value="ECO:0007669"/>
    <property type="project" value="InterPro"/>
</dbReference>
<dbReference type="GO" id="GO:0000049">
    <property type="term" value="F:tRNA binding"/>
    <property type="evidence" value="ECO:0007669"/>
    <property type="project" value="UniProtKB-UniRule"/>
</dbReference>
<dbReference type="GO" id="GO:0006412">
    <property type="term" value="P:translation"/>
    <property type="evidence" value="ECO:0007669"/>
    <property type="project" value="UniProtKB-UniRule"/>
</dbReference>
<dbReference type="FunFam" id="1.10.8.50:FF:000001">
    <property type="entry name" value="30S ribosomal protein S13"/>
    <property type="match status" value="1"/>
</dbReference>
<dbReference type="FunFam" id="4.10.910.10:FF:000001">
    <property type="entry name" value="30S ribosomal protein S13"/>
    <property type="match status" value="1"/>
</dbReference>
<dbReference type="Gene3D" id="1.10.8.50">
    <property type="match status" value="1"/>
</dbReference>
<dbReference type="Gene3D" id="4.10.910.10">
    <property type="entry name" value="30s ribosomal protein s13, domain 2"/>
    <property type="match status" value="1"/>
</dbReference>
<dbReference type="HAMAP" id="MF_01315">
    <property type="entry name" value="Ribosomal_uS13"/>
    <property type="match status" value="1"/>
</dbReference>
<dbReference type="InterPro" id="IPR027437">
    <property type="entry name" value="Rbsml_uS13_C"/>
</dbReference>
<dbReference type="InterPro" id="IPR001892">
    <property type="entry name" value="Ribosomal_uS13"/>
</dbReference>
<dbReference type="InterPro" id="IPR010979">
    <property type="entry name" value="Ribosomal_uS13-like_H2TH"/>
</dbReference>
<dbReference type="InterPro" id="IPR019980">
    <property type="entry name" value="Ribosomal_uS13_bac-type"/>
</dbReference>
<dbReference type="InterPro" id="IPR018269">
    <property type="entry name" value="Ribosomal_uS13_CS"/>
</dbReference>
<dbReference type="NCBIfam" id="TIGR03631">
    <property type="entry name" value="uS13_bact"/>
    <property type="match status" value="1"/>
</dbReference>
<dbReference type="PANTHER" id="PTHR10871">
    <property type="entry name" value="30S RIBOSOMAL PROTEIN S13/40S RIBOSOMAL PROTEIN S18"/>
    <property type="match status" value="1"/>
</dbReference>
<dbReference type="PANTHER" id="PTHR10871:SF1">
    <property type="entry name" value="SMALL RIBOSOMAL SUBUNIT PROTEIN US13M"/>
    <property type="match status" value="1"/>
</dbReference>
<dbReference type="Pfam" id="PF00416">
    <property type="entry name" value="Ribosomal_S13"/>
    <property type="match status" value="1"/>
</dbReference>
<dbReference type="PIRSF" id="PIRSF002134">
    <property type="entry name" value="Ribosomal_S13"/>
    <property type="match status" value="1"/>
</dbReference>
<dbReference type="SUPFAM" id="SSF46946">
    <property type="entry name" value="S13-like H2TH domain"/>
    <property type="match status" value="1"/>
</dbReference>
<dbReference type="PROSITE" id="PS00646">
    <property type="entry name" value="RIBOSOMAL_S13_1"/>
    <property type="match status" value="1"/>
</dbReference>
<dbReference type="PROSITE" id="PS50159">
    <property type="entry name" value="RIBOSOMAL_S13_2"/>
    <property type="match status" value="1"/>
</dbReference>
<evidence type="ECO:0000255" key="1">
    <source>
        <dbReference type="HAMAP-Rule" id="MF_01315"/>
    </source>
</evidence>
<evidence type="ECO:0000256" key="2">
    <source>
        <dbReference type="SAM" id="MobiDB-lite"/>
    </source>
</evidence>
<evidence type="ECO:0000305" key="3"/>
<feature type="chain" id="PRO_0000132063" description="Small ribosomal subunit protein uS13">
    <location>
        <begin position="1"/>
        <end position="121"/>
    </location>
</feature>
<feature type="region of interest" description="Disordered" evidence="2">
    <location>
        <begin position="94"/>
        <end position="121"/>
    </location>
</feature>
<feature type="compositionally biased region" description="Basic residues" evidence="2">
    <location>
        <begin position="106"/>
        <end position="121"/>
    </location>
</feature>
<accession>O50632</accession>
<accession>Q9JPW5</accession>
<name>RS13_HALH5</name>
<sequence>MARIAGVDIPRDKRVVISLTYIYGVGRSTAQEILAKANVSENTRVRDLTEEELGRIRSAVEEFKVEGDLRREVSLNIKRLIEIGAYRGIRHRRGLPVRGQNTKNNSRTRKGPRRTVANKKK</sequence>
<proteinExistence type="inferred from homology"/>
<comment type="function">
    <text evidence="1">Located at the top of the head of the 30S subunit, it contacts several helices of the 16S rRNA. In the 70S ribosome it contacts the 23S rRNA (bridge B1a) and protein L5 of the 50S subunit (bridge B1b), connecting the 2 subunits; these bridges are implicated in subunit movement. Contacts the tRNAs in the A and P-sites.</text>
</comment>
<comment type="subunit">
    <text evidence="1">Part of the 30S ribosomal subunit. Forms a loose heterodimer with protein S19. Forms two bridges to the 50S subunit in the 70S ribosome.</text>
</comment>
<comment type="similarity">
    <text evidence="1">Belongs to the universal ribosomal protein uS13 family.</text>
</comment>
<organism>
    <name type="scientific">Halalkalibacterium halodurans (strain ATCC BAA-125 / DSM 18197 / FERM 7344 / JCM 9153 / C-125)</name>
    <name type="common">Bacillus halodurans</name>
    <dbReference type="NCBI Taxonomy" id="272558"/>
    <lineage>
        <taxon>Bacteria</taxon>
        <taxon>Bacillati</taxon>
        <taxon>Bacillota</taxon>
        <taxon>Bacilli</taxon>
        <taxon>Bacillales</taxon>
        <taxon>Bacillaceae</taxon>
        <taxon>Halalkalibacterium (ex Joshi et al. 2022)</taxon>
    </lineage>
</organism>